<protein>
    <recommendedName>
        <fullName evidence="1">Leucyl/phenylalanyl-tRNA--protein transferase</fullName>
        <ecNumber evidence="1">2.3.2.6</ecNumber>
    </recommendedName>
    <alternativeName>
        <fullName evidence="1">L/F-transferase</fullName>
    </alternativeName>
    <alternativeName>
        <fullName evidence="1">Leucyltransferase</fullName>
    </alternativeName>
    <alternativeName>
        <fullName evidence="1">Phenyalanyltransferase</fullName>
    </alternativeName>
</protein>
<evidence type="ECO:0000255" key="1">
    <source>
        <dbReference type="HAMAP-Rule" id="MF_00688"/>
    </source>
</evidence>
<dbReference type="EC" id="2.3.2.6" evidence="1"/>
<dbReference type="EMBL" id="FM954972">
    <property type="protein sequence ID" value="CAV18181.1"/>
    <property type="molecule type" value="Genomic_DNA"/>
</dbReference>
<dbReference type="SMR" id="B7VM36"/>
<dbReference type="STRING" id="575788.VS_1077"/>
<dbReference type="KEGG" id="vsp:VS_1077"/>
<dbReference type="PATRIC" id="fig|575788.5.peg.2401"/>
<dbReference type="eggNOG" id="COG2360">
    <property type="taxonomic scope" value="Bacteria"/>
</dbReference>
<dbReference type="HOGENOM" id="CLU_075045_0_0_6"/>
<dbReference type="Proteomes" id="UP000009100">
    <property type="component" value="Chromosome 1"/>
</dbReference>
<dbReference type="GO" id="GO:0005737">
    <property type="term" value="C:cytoplasm"/>
    <property type="evidence" value="ECO:0007669"/>
    <property type="project" value="UniProtKB-SubCell"/>
</dbReference>
<dbReference type="GO" id="GO:0008914">
    <property type="term" value="F:leucyl-tRNA--protein transferase activity"/>
    <property type="evidence" value="ECO:0007669"/>
    <property type="project" value="UniProtKB-UniRule"/>
</dbReference>
<dbReference type="GO" id="GO:0030163">
    <property type="term" value="P:protein catabolic process"/>
    <property type="evidence" value="ECO:0007669"/>
    <property type="project" value="UniProtKB-UniRule"/>
</dbReference>
<dbReference type="FunFam" id="3.30.70.3550:FF:000001">
    <property type="entry name" value="Leucyl/phenylalanyl-tRNA--protein transferase"/>
    <property type="match status" value="1"/>
</dbReference>
<dbReference type="FunFam" id="3.40.630.70:FF:000001">
    <property type="entry name" value="Leucyl/phenylalanyl-tRNA--protein transferase"/>
    <property type="match status" value="1"/>
</dbReference>
<dbReference type="Gene3D" id="3.40.630.70">
    <property type="entry name" value="Leucyl/phenylalanyl-tRNA-protein transferase, C-terminal domain"/>
    <property type="match status" value="1"/>
</dbReference>
<dbReference type="Gene3D" id="3.30.70.3550">
    <property type="entry name" value="Leucyl/phenylalanyl-tRNA-protein transferase, N-terminal domain"/>
    <property type="match status" value="1"/>
</dbReference>
<dbReference type="HAMAP" id="MF_00688">
    <property type="entry name" value="Leu_Phe_trans"/>
    <property type="match status" value="1"/>
</dbReference>
<dbReference type="InterPro" id="IPR016181">
    <property type="entry name" value="Acyl_CoA_acyltransferase"/>
</dbReference>
<dbReference type="InterPro" id="IPR004616">
    <property type="entry name" value="Leu/Phe-tRNA_Trfase"/>
</dbReference>
<dbReference type="InterPro" id="IPR042203">
    <property type="entry name" value="Leu/Phe-tRNA_Trfase_C"/>
</dbReference>
<dbReference type="InterPro" id="IPR042221">
    <property type="entry name" value="Leu/Phe-tRNA_Trfase_N"/>
</dbReference>
<dbReference type="NCBIfam" id="TIGR00667">
    <property type="entry name" value="aat"/>
    <property type="match status" value="1"/>
</dbReference>
<dbReference type="PANTHER" id="PTHR30098">
    <property type="entry name" value="LEUCYL/PHENYLALANYL-TRNA--PROTEIN TRANSFERASE"/>
    <property type="match status" value="1"/>
</dbReference>
<dbReference type="PANTHER" id="PTHR30098:SF2">
    <property type="entry name" value="LEUCYL_PHENYLALANYL-TRNA--PROTEIN TRANSFERASE"/>
    <property type="match status" value="1"/>
</dbReference>
<dbReference type="Pfam" id="PF03588">
    <property type="entry name" value="Leu_Phe_trans"/>
    <property type="match status" value="1"/>
</dbReference>
<dbReference type="SUPFAM" id="SSF55729">
    <property type="entry name" value="Acyl-CoA N-acyltransferases (Nat)"/>
    <property type="match status" value="1"/>
</dbReference>
<comment type="function">
    <text evidence="1">Functions in the N-end rule pathway of protein degradation where it conjugates Leu, Phe and, less efficiently, Met from aminoacyl-tRNAs to the N-termini of proteins containing an N-terminal arginine or lysine.</text>
</comment>
<comment type="catalytic activity">
    <reaction evidence="1">
        <text>N-terminal L-lysyl-[protein] + L-leucyl-tRNA(Leu) = N-terminal L-leucyl-L-lysyl-[protein] + tRNA(Leu) + H(+)</text>
        <dbReference type="Rhea" id="RHEA:12340"/>
        <dbReference type="Rhea" id="RHEA-COMP:9613"/>
        <dbReference type="Rhea" id="RHEA-COMP:9622"/>
        <dbReference type="Rhea" id="RHEA-COMP:12670"/>
        <dbReference type="Rhea" id="RHEA-COMP:12671"/>
        <dbReference type="ChEBI" id="CHEBI:15378"/>
        <dbReference type="ChEBI" id="CHEBI:65249"/>
        <dbReference type="ChEBI" id="CHEBI:78442"/>
        <dbReference type="ChEBI" id="CHEBI:78494"/>
        <dbReference type="ChEBI" id="CHEBI:133043"/>
        <dbReference type="EC" id="2.3.2.6"/>
    </reaction>
</comment>
<comment type="catalytic activity">
    <reaction evidence="1">
        <text>N-terminal L-arginyl-[protein] + L-leucyl-tRNA(Leu) = N-terminal L-leucyl-L-arginyl-[protein] + tRNA(Leu) + H(+)</text>
        <dbReference type="Rhea" id="RHEA:50416"/>
        <dbReference type="Rhea" id="RHEA-COMP:9613"/>
        <dbReference type="Rhea" id="RHEA-COMP:9622"/>
        <dbReference type="Rhea" id="RHEA-COMP:12672"/>
        <dbReference type="Rhea" id="RHEA-COMP:12673"/>
        <dbReference type="ChEBI" id="CHEBI:15378"/>
        <dbReference type="ChEBI" id="CHEBI:64719"/>
        <dbReference type="ChEBI" id="CHEBI:78442"/>
        <dbReference type="ChEBI" id="CHEBI:78494"/>
        <dbReference type="ChEBI" id="CHEBI:133044"/>
        <dbReference type="EC" id="2.3.2.6"/>
    </reaction>
</comment>
<comment type="catalytic activity">
    <reaction evidence="1">
        <text>L-phenylalanyl-tRNA(Phe) + an N-terminal L-alpha-aminoacyl-[protein] = an N-terminal L-phenylalanyl-L-alpha-aminoacyl-[protein] + tRNA(Phe)</text>
        <dbReference type="Rhea" id="RHEA:43632"/>
        <dbReference type="Rhea" id="RHEA-COMP:9668"/>
        <dbReference type="Rhea" id="RHEA-COMP:9699"/>
        <dbReference type="Rhea" id="RHEA-COMP:10636"/>
        <dbReference type="Rhea" id="RHEA-COMP:10637"/>
        <dbReference type="ChEBI" id="CHEBI:78442"/>
        <dbReference type="ChEBI" id="CHEBI:78531"/>
        <dbReference type="ChEBI" id="CHEBI:78597"/>
        <dbReference type="ChEBI" id="CHEBI:83561"/>
        <dbReference type="EC" id="2.3.2.6"/>
    </reaction>
</comment>
<comment type="subcellular location">
    <subcellularLocation>
        <location evidence="1">Cytoplasm</location>
    </subcellularLocation>
</comment>
<comment type="similarity">
    <text evidence="1">Belongs to the L/F-transferase family.</text>
</comment>
<reference key="1">
    <citation type="submission" date="2009-02" db="EMBL/GenBank/DDBJ databases">
        <title>Vibrio splendidus str. LGP32 complete genome.</title>
        <authorList>
            <person name="Mazel D."/>
            <person name="Le Roux F."/>
        </authorList>
    </citation>
    <scope>NUCLEOTIDE SEQUENCE [LARGE SCALE GENOMIC DNA]</scope>
    <source>
        <strain>LGP32</strain>
    </source>
</reference>
<proteinExistence type="inferred from homology"/>
<organism>
    <name type="scientific">Vibrio atlanticus (strain LGP32)</name>
    <name type="common">Vibrio splendidus (strain Mel32)</name>
    <dbReference type="NCBI Taxonomy" id="575788"/>
    <lineage>
        <taxon>Bacteria</taxon>
        <taxon>Pseudomonadati</taxon>
        <taxon>Pseudomonadota</taxon>
        <taxon>Gammaproteobacteria</taxon>
        <taxon>Vibrionales</taxon>
        <taxon>Vibrionaceae</taxon>
        <taxon>Vibrio</taxon>
    </lineage>
</organism>
<keyword id="KW-0012">Acyltransferase</keyword>
<keyword id="KW-0963">Cytoplasm</keyword>
<keyword id="KW-0808">Transferase</keyword>
<name>LFTR_VIBA3</name>
<feature type="chain" id="PRO_1000147798" description="Leucyl/phenylalanyl-tRNA--protein transferase">
    <location>
        <begin position="1"/>
        <end position="236"/>
    </location>
</feature>
<accession>B7VM36</accession>
<sequence length="236" mass="26821">MTIYLTELDTTSIEFPSPFDALDEPNGLLAFGGDLSPIRILNAYSQGIFPWYGPGEPILWWSPAPRAVFNPKTFEPSKSLKKFQRKHNYRVSINQATDRVIGYCSSLRPEEETWLNNDMQAAYRELASLGFCHSVEVWQGDELIGGLYGLQRGQVFCGESMFSLKTNASKIALWYFCEHFTQFGGQLIDCQVMNPHLESLGAIEVDRDEFLSSLRLLKETSVNDACSKKQWLKEMP</sequence>
<gene>
    <name evidence="1" type="primary">aat</name>
    <name type="ordered locus">VS_1077</name>
</gene>